<protein>
    <recommendedName>
        <fullName evidence="1">Large ribosomal subunit protein bL33</fullName>
    </recommendedName>
    <alternativeName>
        <fullName evidence="2">50S ribosomal protein L33</fullName>
    </alternativeName>
</protein>
<reference key="1">
    <citation type="journal article" date="2011" name="J. Bacteriol.">
        <title>Comparative genomics of 28 Salmonella enterica isolates: evidence for CRISPR-mediated adaptive sublineage evolution.</title>
        <authorList>
            <person name="Fricke W.F."/>
            <person name="Mammel M.K."/>
            <person name="McDermott P.F."/>
            <person name="Tartera C."/>
            <person name="White D.G."/>
            <person name="Leclerc J.E."/>
            <person name="Ravel J."/>
            <person name="Cebula T.A."/>
        </authorList>
    </citation>
    <scope>NUCLEOTIDE SEQUENCE [LARGE SCALE GENOMIC DNA]</scope>
    <source>
        <strain>SL476</strain>
    </source>
</reference>
<feature type="chain" id="PRO_1000115157" description="Large ribosomal subunit protein bL33">
    <location>
        <begin position="1"/>
        <end position="55"/>
    </location>
</feature>
<evidence type="ECO:0000255" key="1">
    <source>
        <dbReference type="HAMAP-Rule" id="MF_00294"/>
    </source>
</evidence>
<evidence type="ECO:0000305" key="2"/>
<organism>
    <name type="scientific">Salmonella heidelberg (strain SL476)</name>
    <dbReference type="NCBI Taxonomy" id="454169"/>
    <lineage>
        <taxon>Bacteria</taxon>
        <taxon>Pseudomonadati</taxon>
        <taxon>Pseudomonadota</taxon>
        <taxon>Gammaproteobacteria</taxon>
        <taxon>Enterobacterales</taxon>
        <taxon>Enterobacteriaceae</taxon>
        <taxon>Salmonella</taxon>
    </lineage>
</organism>
<gene>
    <name evidence="1" type="primary">rpmG</name>
    <name type="ordered locus">SeHA_C4053</name>
</gene>
<sequence length="55" mass="6372">MAKGIREKIKLVSSAGTGHFYTTTKNKRTKPEKLELKKFDPVVRQHVIYKEAKIK</sequence>
<keyword id="KW-0687">Ribonucleoprotein</keyword>
<keyword id="KW-0689">Ribosomal protein</keyword>
<accession>B4T9C1</accession>
<dbReference type="EMBL" id="CP001120">
    <property type="protein sequence ID" value="ACF69644.1"/>
    <property type="molecule type" value="Genomic_DNA"/>
</dbReference>
<dbReference type="RefSeq" id="WP_001051798.1">
    <property type="nucleotide sequence ID" value="NC_011083.1"/>
</dbReference>
<dbReference type="SMR" id="B4T9C1"/>
<dbReference type="GeneID" id="97607673"/>
<dbReference type="KEGG" id="seh:SeHA_C4053"/>
<dbReference type="HOGENOM" id="CLU_190949_1_1_6"/>
<dbReference type="Proteomes" id="UP000001866">
    <property type="component" value="Chromosome"/>
</dbReference>
<dbReference type="GO" id="GO:0022625">
    <property type="term" value="C:cytosolic large ribosomal subunit"/>
    <property type="evidence" value="ECO:0007669"/>
    <property type="project" value="TreeGrafter"/>
</dbReference>
<dbReference type="GO" id="GO:0003735">
    <property type="term" value="F:structural constituent of ribosome"/>
    <property type="evidence" value="ECO:0007669"/>
    <property type="project" value="InterPro"/>
</dbReference>
<dbReference type="GO" id="GO:0006412">
    <property type="term" value="P:translation"/>
    <property type="evidence" value="ECO:0007669"/>
    <property type="project" value="UniProtKB-UniRule"/>
</dbReference>
<dbReference type="FunFam" id="2.20.28.120:FF:000001">
    <property type="entry name" value="50S ribosomal protein L33"/>
    <property type="match status" value="1"/>
</dbReference>
<dbReference type="Gene3D" id="2.20.28.120">
    <property type="entry name" value="Ribosomal protein L33"/>
    <property type="match status" value="1"/>
</dbReference>
<dbReference type="HAMAP" id="MF_00294">
    <property type="entry name" value="Ribosomal_bL33"/>
    <property type="match status" value="1"/>
</dbReference>
<dbReference type="InterPro" id="IPR001705">
    <property type="entry name" value="Ribosomal_bL33"/>
</dbReference>
<dbReference type="InterPro" id="IPR018264">
    <property type="entry name" value="Ribosomal_bL33_CS"/>
</dbReference>
<dbReference type="InterPro" id="IPR038584">
    <property type="entry name" value="Ribosomal_bL33_sf"/>
</dbReference>
<dbReference type="InterPro" id="IPR011332">
    <property type="entry name" value="Ribosomal_zn-bd"/>
</dbReference>
<dbReference type="NCBIfam" id="NF001860">
    <property type="entry name" value="PRK00595.1"/>
    <property type="match status" value="1"/>
</dbReference>
<dbReference type="NCBIfam" id="TIGR01023">
    <property type="entry name" value="rpmG_bact"/>
    <property type="match status" value="1"/>
</dbReference>
<dbReference type="PANTHER" id="PTHR15238">
    <property type="entry name" value="54S RIBOSOMAL PROTEIN L39, MITOCHONDRIAL"/>
    <property type="match status" value="1"/>
</dbReference>
<dbReference type="PANTHER" id="PTHR15238:SF1">
    <property type="entry name" value="LARGE RIBOSOMAL SUBUNIT PROTEIN BL33M"/>
    <property type="match status" value="1"/>
</dbReference>
<dbReference type="Pfam" id="PF00471">
    <property type="entry name" value="Ribosomal_L33"/>
    <property type="match status" value="1"/>
</dbReference>
<dbReference type="SUPFAM" id="SSF57829">
    <property type="entry name" value="Zn-binding ribosomal proteins"/>
    <property type="match status" value="1"/>
</dbReference>
<dbReference type="PROSITE" id="PS00582">
    <property type="entry name" value="RIBOSOMAL_L33"/>
    <property type="match status" value="1"/>
</dbReference>
<name>RL33_SALHS</name>
<comment type="similarity">
    <text evidence="1">Belongs to the bacterial ribosomal protein bL33 family.</text>
</comment>
<proteinExistence type="inferred from homology"/>